<proteinExistence type="evidence at protein level"/>
<dbReference type="EC" id="1.-.-.-" evidence="3"/>
<dbReference type="EMBL" id="LC435375">
    <property type="protein sequence ID" value="BBH43505.1"/>
    <property type="molecule type" value="mRNA"/>
</dbReference>
<dbReference type="GO" id="GO:0016020">
    <property type="term" value="C:membrane"/>
    <property type="evidence" value="ECO:0007669"/>
    <property type="project" value="UniProtKB-SubCell"/>
</dbReference>
<dbReference type="GO" id="GO:0016491">
    <property type="term" value="F:oxidoreductase activity"/>
    <property type="evidence" value="ECO:0007669"/>
    <property type="project" value="UniProtKB-KW"/>
</dbReference>
<dbReference type="InterPro" id="IPR048273">
    <property type="entry name" value="Luciferase"/>
</dbReference>
<dbReference type="InterPro" id="IPR040841">
    <property type="entry name" value="Luciferase_dom"/>
</dbReference>
<dbReference type="PANTHER" id="PTHR38695">
    <property type="entry name" value="AMINO ACID PERMEASE_ SLC12A DOMAIN-CONTAINING PROTEIN"/>
    <property type="match status" value="1"/>
</dbReference>
<dbReference type="PANTHER" id="PTHR38695:SF1">
    <property type="entry name" value="AMINO ACID PERMEASE_ SLC12A DOMAIN-CONTAINING PROTEIN"/>
    <property type="match status" value="1"/>
</dbReference>
<dbReference type="Pfam" id="PF17648">
    <property type="entry name" value="Luciferase"/>
    <property type="match status" value="1"/>
</dbReference>
<reference key="1">
    <citation type="journal article" date="2018" name="Proc. Natl. Acad. Sci. U.S.A.">
        <title>Genetically encodable bioluminescent system from fungi.</title>
        <authorList>
            <person name="Kotlobay A.A."/>
            <person name="Sarkisyan K.S."/>
            <person name="Mokrushina Y.A."/>
            <person name="Marcet-Houben M."/>
            <person name="Serebrovskaya E.O."/>
            <person name="Markina N.M."/>
            <person name="Gonzalez Somermeyer L."/>
            <person name="Gorokhovatsky A.Y."/>
            <person name="Vvedensky A."/>
            <person name="Purtov K.V."/>
            <person name="Petushkov V.N."/>
            <person name="Rodionova N.S."/>
            <person name="Chepurnyh T.V."/>
            <person name="Fakhranurova L.I."/>
            <person name="Guglya E.B."/>
            <person name="Ziganshin R."/>
            <person name="Tsarkova A.S."/>
            <person name="Kaskova Z.M."/>
            <person name="Shender V."/>
            <person name="Abakumov M."/>
            <person name="Abakumova T.O."/>
            <person name="Povolotskaya I.S."/>
            <person name="Eroshkin F.M."/>
            <person name="Zaraisky A.G."/>
            <person name="Mishin A.S."/>
            <person name="Dolgov S.V."/>
            <person name="Mitiouchkina T.Y."/>
            <person name="Kopantzev E.P."/>
            <person name="Waldenmaier H.E."/>
            <person name="Oliveira A.G."/>
            <person name="Oba Y."/>
            <person name="Barsova E."/>
            <person name="Bogdanova E.A."/>
            <person name="Gabaldon T."/>
            <person name="Stevani C.V."/>
            <person name="Lukyanov S."/>
            <person name="Smirnov I.V."/>
            <person name="Gitelson J.I."/>
            <person name="Kondrashov F.A."/>
            <person name="Yampolsky I.V."/>
        </authorList>
    </citation>
    <scope>NUCLEOTIDE SEQUENCE [MRNA]</scope>
    <scope>IDENTIFICATION</scope>
    <scope>FUNCTION</scope>
    <scope>BIOTECHNOLOGY</scope>
</reference>
<evidence type="ECO:0000250" key="1">
    <source>
        <dbReference type="UniProtKB" id="A0A3G9JYH7"/>
    </source>
</evidence>
<evidence type="ECO:0000255" key="2"/>
<evidence type="ECO:0000269" key="3">
    <source>
    </source>
</evidence>
<evidence type="ECO:0000303" key="4">
    <source>
    </source>
</evidence>
<evidence type="ECO:0000305" key="5"/>
<evidence type="ECO:0000305" key="6">
    <source>
    </source>
</evidence>
<accession>A0A3G9K3N1</accession>
<protein>
    <recommendedName>
        <fullName evidence="4">Luciferase</fullName>
        <ecNumber evidence="3">1.-.-.-</ecNumber>
    </recommendedName>
    <alternativeName>
        <fullName evidence="4">Fungal bioluminescence cycle protein luz</fullName>
    </alternativeName>
</protein>
<gene>
    <name evidence="4" type="primary">luz</name>
</gene>
<sequence>MSFIDSMKLDFVGHLFGIRNRGLATACCAVAVASAIAFPYIRRDYQTFLSGGPSYAPQNIKGYLIVCVLALFRQEQKGLAIYDRLPEKRRWLPDLPPRNGPRPITTSHIIQRQRNQAPDSKFALEELKATVIPRVQARHTDLTHLSLSKFEFHAEAIFLLPSVPIDDPKNVPSHDTVRRTKREIAHMHDYHDFTLHLALAAQDGKEVVAKGWGQRHPLAGPGVPGPPTEWTFIYAPRNEEELAVVEMIIEASIGYMTNDPAGTVIV</sequence>
<organism>
    <name type="scientific">Armillaria ostoyae</name>
    <name type="common">Armillaria root rot fungus</name>
    <dbReference type="NCBI Taxonomy" id="47428"/>
    <lineage>
        <taxon>Eukaryota</taxon>
        <taxon>Fungi</taxon>
        <taxon>Dikarya</taxon>
        <taxon>Basidiomycota</taxon>
        <taxon>Agaricomycotina</taxon>
        <taxon>Agaricomycetes</taxon>
        <taxon>Agaricomycetidae</taxon>
        <taxon>Agaricales</taxon>
        <taxon>Marasmiineae</taxon>
        <taxon>Physalacriaceae</taxon>
        <taxon>Armillaria</taxon>
    </lineage>
</organism>
<name>LUZ_ARMOS</name>
<keyword id="KW-0472">Membrane</keyword>
<keyword id="KW-0560">Oxidoreductase</keyword>
<keyword id="KW-0812">Transmembrane</keyword>
<keyword id="KW-1133">Transmembrane helix</keyword>
<comment type="function">
    <text evidence="1 3 6">Luciferase; part of the gene cluster that mediates the fungal bioluminescence cycle (PubMed:30478037). Uses the fungal luciferin 3-hydroxyhispidin as a substrate to produce an endoperoxide as a high-energy intermediate with decomposition that yields oxyluciferin (also known as caffeoylpyruvate) and light emission (By similarity). The fungal bioluminescence cycle begins with the hispidin synthetase that catalyzes the formation of hispidin which is further hydroxylated by the hispidin-3-hydroxylase, yielding the fungal luciferin 3-hydroxyhispidin. The luciferase then produces an endoperoxide as a high-energy intermediate with decomposition that yields oxyluciferin and light emission. Oxyluciferin can be recycled to caffeic acid by caffeoylpyruvate hydrolase (Probable) (PubMed:30478037).</text>
</comment>
<comment type="catalytic activity">
    <reaction evidence="1">
        <text>3-hydroxyhispidin + O2 = (E)-caffeoylpyruvate + hnu + CO2</text>
        <dbReference type="Rhea" id="RHEA:71143"/>
        <dbReference type="ChEBI" id="CHEBI:15379"/>
        <dbReference type="ChEBI" id="CHEBI:16526"/>
        <dbReference type="ChEBI" id="CHEBI:30212"/>
        <dbReference type="ChEBI" id="CHEBI:190289"/>
        <dbReference type="ChEBI" id="CHEBI:190290"/>
    </reaction>
    <physiologicalReaction direction="left-to-right" evidence="1">
        <dbReference type="Rhea" id="RHEA:71144"/>
    </physiologicalReaction>
</comment>
<comment type="catalytic activity">
    <reaction evidence="1">
        <text>3-hydroxyhispidin + O2 = 4-[(E)-2-(3,4-dihydroxyphenyl)ethenyl]-1,7-dihydroxy-2,3,5-trioxabicyclo[2.2.2]oct-7-en-6-one</text>
        <dbReference type="Rhea" id="RHEA:71147"/>
        <dbReference type="ChEBI" id="CHEBI:15379"/>
        <dbReference type="ChEBI" id="CHEBI:190289"/>
        <dbReference type="ChEBI" id="CHEBI:190291"/>
    </reaction>
    <physiologicalReaction direction="left-to-right" evidence="1">
        <dbReference type="Rhea" id="RHEA:71148"/>
    </physiologicalReaction>
</comment>
<comment type="subcellular location">
    <subcellularLocation>
        <location evidence="1">Membrane</location>
        <topology evidence="2">Single-pass membrane protein</topology>
    </subcellularLocation>
</comment>
<comment type="biotechnology">
    <text evidence="3">The availability of a complete eukaryotic luciferin biosynthesis pathway provides several applications in biomedicine and bioengineering.</text>
</comment>
<comment type="similarity">
    <text evidence="5">Belongs to the fungal luciferase family.</text>
</comment>
<feature type="chain" id="PRO_0000455709" description="Luciferase">
    <location>
        <begin position="1"/>
        <end position="266"/>
    </location>
</feature>
<feature type="transmembrane region" description="Helical" evidence="2">
    <location>
        <begin position="22"/>
        <end position="41"/>
    </location>
</feature>